<keyword id="KW-0001">2Fe-2S</keyword>
<keyword id="KW-0408">Iron</keyword>
<keyword id="KW-0411">Iron-sulfur</keyword>
<keyword id="KW-0479">Metal-binding</keyword>
<keyword id="KW-1185">Reference proteome</keyword>
<reference key="1">
    <citation type="journal article" date="1998" name="Science">
        <title>Genome sequence of the nematode C. elegans: a platform for investigating biology.</title>
        <authorList>
            <consortium name="The C. elegans sequencing consortium"/>
        </authorList>
    </citation>
    <scope>NUCLEOTIDE SEQUENCE [LARGE SCALE GENOMIC DNA]</scope>
    <source>
        <strain>Bristol N2</strain>
    </source>
</reference>
<feature type="chain" id="PRO_0000141654" description="Uncharacterized monothiol glutaredoxin F10D7.3">
    <location>
        <begin position="1"/>
        <end position="146"/>
    </location>
</feature>
<feature type="domain" description="Glutaredoxin" evidence="2">
    <location>
        <begin position="34"/>
        <end position="135"/>
    </location>
</feature>
<feature type="binding site" evidence="1">
    <location>
        <position position="54"/>
    </location>
    <ligand>
        <name>[2Fe-2S] cluster</name>
        <dbReference type="ChEBI" id="CHEBI:190135"/>
        <note>ligand shared between dimeric partners</note>
    </ligand>
</feature>
<accession>Q19297</accession>
<sequence length="146" mass="16611">MLRILTVVLALVTIATVHAELSKKKEDKTLKDLEDKIVNDVMTHKVMVYSKTYCPWSKRLKAILANYEIDDMKIVELDRSNQTEEMQEILKKYSGRTTVPQLFISGKFVGGHDETKAIEEKGELRPLLEKAHALFTNRVPVPDNGA</sequence>
<name>YZ73_CAEEL</name>
<evidence type="ECO:0000255" key="1"/>
<evidence type="ECO:0000255" key="2">
    <source>
        <dbReference type="PROSITE-ProRule" id="PRU00686"/>
    </source>
</evidence>
<evidence type="ECO:0000305" key="3"/>
<protein>
    <recommendedName>
        <fullName>Uncharacterized monothiol glutaredoxin F10D7.3</fullName>
    </recommendedName>
</protein>
<dbReference type="EMBL" id="FO080923">
    <property type="protein sequence ID" value="CCD67838.1"/>
    <property type="molecule type" value="Genomic_DNA"/>
</dbReference>
<dbReference type="PIR" id="T16026">
    <property type="entry name" value="T16026"/>
</dbReference>
<dbReference type="RefSeq" id="NP_510815.2">
    <property type="nucleotide sequence ID" value="NM_078414.5"/>
</dbReference>
<dbReference type="SMR" id="Q19297"/>
<dbReference type="FunCoup" id="Q19297">
    <property type="interactions" value="52"/>
</dbReference>
<dbReference type="STRING" id="6239.F10D7.3.1"/>
<dbReference type="iPTMnet" id="Q19297"/>
<dbReference type="PaxDb" id="6239-F10D7.3"/>
<dbReference type="PeptideAtlas" id="Q19297"/>
<dbReference type="EnsemblMetazoa" id="F10D7.3.1">
    <property type="protein sequence ID" value="F10D7.3.1"/>
    <property type="gene ID" value="WBGene00017340"/>
</dbReference>
<dbReference type="GeneID" id="181766"/>
<dbReference type="KEGG" id="cel:CELE_F10D7.3"/>
<dbReference type="UCSC" id="F10D7.3">
    <property type="organism name" value="c. elegans"/>
</dbReference>
<dbReference type="AGR" id="WB:WBGene00017340"/>
<dbReference type="CTD" id="181766"/>
<dbReference type="WormBase" id="F10D7.3">
    <property type="protein sequence ID" value="CE29754"/>
    <property type="gene ID" value="WBGene00017340"/>
</dbReference>
<dbReference type="eggNOG" id="KOG1752">
    <property type="taxonomic scope" value="Eukaryota"/>
</dbReference>
<dbReference type="GeneTree" id="ENSGT00940000162420"/>
<dbReference type="HOGENOM" id="CLU_026126_1_0_1"/>
<dbReference type="InParanoid" id="Q19297"/>
<dbReference type="OMA" id="YSMEARE"/>
<dbReference type="OrthoDB" id="418495at2759"/>
<dbReference type="PhylomeDB" id="Q19297"/>
<dbReference type="PRO" id="PR:Q19297"/>
<dbReference type="Proteomes" id="UP000001940">
    <property type="component" value="Chromosome X"/>
</dbReference>
<dbReference type="Bgee" id="WBGene00017340">
    <property type="expression patterns" value="Expressed in embryo and 4 other cell types or tissues"/>
</dbReference>
<dbReference type="GO" id="GO:0005737">
    <property type="term" value="C:cytoplasm"/>
    <property type="evidence" value="ECO:0000318"/>
    <property type="project" value="GO_Central"/>
</dbReference>
<dbReference type="GO" id="GO:0051537">
    <property type="term" value="F:2 iron, 2 sulfur cluster binding"/>
    <property type="evidence" value="ECO:0007669"/>
    <property type="project" value="UniProtKB-KW"/>
</dbReference>
<dbReference type="GO" id="GO:0015038">
    <property type="term" value="F:glutathione disulfide oxidoreductase activity"/>
    <property type="evidence" value="ECO:0000318"/>
    <property type="project" value="GO_Central"/>
</dbReference>
<dbReference type="GO" id="GO:0046872">
    <property type="term" value="F:metal ion binding"/>
    <property type="evidence" value="ECO:0007669"/>
    <property type="project" value="UniProtKB-KW"/>
</dbReference>
<dbReference type="GO" id="GO:0034599">
    <property type="term" value="P:cellular response to oxidative stress"/>
    <property type="evidence" value="ECO:0000318"/>
    <property type="project" value="GO_Central"/>
</dbReference>
<dbReference type="CDD" id="cd03419">
    <property type="entry name" value="GRX_GRXh_1_2_like"/>
    <property type="match status" value="1"/>
</dbReference>
<dbReference type="FunFam" id="3.40.30.10:FF:000486">
    <property type="entry name" value="Uncharacterized monothiol glutaredoxin F10D7.3"/>
    <property type="match status" value="1"/>
</dbReference>
<dbReference type="Gene3D" id="3.40.30.10">
    <property type="entry name" value="Glutaredoxin"/>
    <property type="match status" value="1"/>
</dbReference>
<dbReference type="InterPro" id="IPR002109">
    <property type="entry name" value="Glutaredoxin"/>
</dbReference>
<dbReference type="InterPro" id="IPR011899">
    <property type="entry name" value="Glutaredoxin_euk/vir"/>
</dbReference>
<dbReference type="InterPro" id="IPR014025">
    <property type="entry name" value="Glutaredoxin_subgr"/>
</dbReference>
<dbReference type="InterPro" id="IPR036249">
    <property type="entry name" value="Thioredoxin-like_sf"/>
</dbReference>
<dbReference type="NCBIfam" id="TIGR02180">
    <property type="entry name" value="GRX_euk"/>
    <property type="match status" value="1"/>
</dbReference>
<dbReference type="PANTHER" id="PTHR45694">
    <property type="entry name" value="GLUTAREDOXIN 2"/>
    <property type="match status" value="1"/>
</dbReference>
<dbReference type="PANTHER" id="PTHR45694:SF18">
    <property type="entry name" value="GLUTAREDOXIN-1-RELATED"/>
    <property type="match status" value="1"/>
</dbReference>
<dbReference type="Pfam" id="PF00462">
    <property type="entry name" value="Glutaredoxin"/>
    <property type="match status" value="1"/>
</dbReference>
<dbReference type="PRINTS" id="PR00160">
    <property type="entry name" value="GLUTAREDOXIN"/>
</dbReference>
<dbReference type="SUPFAM" id="SSF52833">
    <property type="entry name" value="Thioredoxin-like"/>
    <property type="match status" value="1"/>
</dbReference>
<dbReference type="PROSITE" id="PS51354">
    <property type="entry name" value="GLUTAREDOXIN_2"/>
    <property type="match status" value="1"/>
</dbReference>
<gene>
    <name type="ORF">F10D7.3</name>
</gene>
<proteinExistence type="inferred from homology"/>
<organism>
    <name type="scientific">Caenorhabditis elegans</name>
    <dbReference type="NCBI Taxonomy" id="6239"/>
    <lineage>
        <taxon>Eukaryota</taxon>
        <taxon>Metazoa</taxon>
        <taxon>Ecdysozoa</taxon>
        <taxon>Nematoda</taxon>
        <taxon>Chromadorea</taxon>
        <taxon>Rhabditida</taxon>
        <taxon>Rhabditina</taxon>
        <taxon>Rhabditomorpha</taxon>
        <taxon>Rhabditoidea</taxon>
        <taxon>Rhabditidae</taxon>
        <taxon>Peloderinae</taxon>
        <taxon>Caenorhabditis</taxon>
    </lineage>
</organism>
<comment type="similarity">
    <text evidence="3">Belongs to the glutaredoxin family. Monothiol subfamily.</text>
</comment>